<feature type="initiator methionine" description="Removed" evidence="2">
    <location>
        <position position="1"/>
    </location>
</feature>
<feature type="chain" id="PRO_0000155087" description="Acetyl-CoA decarbonylase/synthase complex subunit epsilon 2">
    <location>
        <begin position="2"/>
        <end position="175"/>
    </location>
</feature>
<feature type="helix" evidence="3">
    <location>
        <begin position="26"/>
        <end position="35"/>
    </location>
</feature>
<feature type="strand" evidence="3">
    <location>
        <begin position="37"/>
        <end position="43"/>
    </location>
</feature>
<feature type="helix" evidence="3">
    <location>
        <begin position="49"/>
        <end position="59"/>
    </location>
</feature>
<feature type="strand" evidence="3">
    <location>
        <begin position="61"/>
        <end position="68"/>
    </location>
</feature>
<feature type="helix" evidence="3">
    <location>
        <begin position="71"/>
        <end position="77"/>
    </location>
</feature>
<feature type="helix" evidence="3">
    <location>
        <begin position="81"/>
        <end position="83"/>
    </location>
</feature>
<feature type="strand" evidence="3">
    <location>
        <begin position="84"/>
        <end position="87"/>
    </location>
</feature>
<feature type="helix" evidence="3">
    <location>
        <begin position="89"/>
        <end position="97"/>
    </location>
</feature>
<feature type="strand" evidence="3">
    <location>
        <begin position="111"/>
        <end position="117"/>
    </location>
</feature>
<feature type="helix" evidence="3">
    <location>
        <begin position="120"/>
        <end position="133"/>
    </location>
</feature>
<feature type="strand" evidence="3">
    <location>
        <begin position="138"/>
        <end position="141"/>
    </location>
</feature>
<feature type="strand" evidence="3">
    <location>
        <begin position="143"/>
        <end position="145"/>
    </location>
</feature>
<feature type="strand" evidence="3">
    <location>
        <begin position="150"/>
        <end position="153"/>
    </location>
</feature>
<feature type="helix" evidence="3">
    <location>
        <begin position="158"/>
        <end position="160"/>
    </location>
</feature>
<feature type="helix" evidence="3">
    <location>
        <begin position="161"/>
        <end position="174"/>
    </location>
</feature>
<proteinExistence type="evidence at protein level"/>
<keyword id="KW-0002">3D-structure</keyword>
<keyword id="KW-0903">Direct protein sequencing</keyword>
<keyword id="KW-1185">Reference proteome</keyword>
<evidence type="ECO:0000255" key="1">
    <source>
        <dbReference type="HAMAP-Rule" id="MF_01134"/>
    </source>
</evidence>
<evidence type="ECO:0000269" key="2">
    <source>
    </source>
</evidence>
<evidence type="ECO:0007829" key="3">
    <source>
        <dbReference type="PDB" id="1YTL"/>
    </source>
</evidence>
<organism>
    <name type="scientific">Archaeoglobus fulgidus (strain ATCC 49558 / DSM 4304 / JCM 9628 / NBRC 100126 / VC-16)</name>
    <dbReference type="NCBI Taxonomy" id="224325"/>
    <lineage>
        <taxon>Archaea</taxon>
        <taxon>Methanobacteriati</taxon>
        <taxon>Methanobacteriota</taxon>
        <taxon>Archaeoglobi</taxon>
        <taxon>Archaeoglobales</taxon>
        <taxon>Archaeoglobaceae</taxon>
        <taxon>Archaeoglobus</taxon>
    </lineage>
</organism>
<protein>
    <recommendedName>
        <fullName evidence="1">Acetyl-CoA decarbonylase/synthase complex subunit epsilon 2</fullName>
        <shortName evidence="1">ACDS complex subunit epsilon 2</shortName>
    </recommendedName>
    <alternativeName>
        <fullName evidence="1">ACDS complex carbon monoxide dehydrogenase subunit epsilon 2</fullName>
        <shortName evidence="1">ACDS CODH subunit epsilon 2</shortName>
    </alternativeName>
</protein>
<gene>
    <name type="primary">cdhB2</name>
    <name type="ordered locus">AF_2398</name>
</gene>
<accession>O30273</accession>
<dbReference type="EMBL" id="AE000782">
    <property type="protein sequence ID" value="AAB91265.1"/>
    <property type="molecule type" value="Genomic_DNA"/>
</dbReference>
<dbReference type="PIR" id="G69549">
    <property type="entry name" value="G69549"/>
</dbReference>
<dbReference type="RefSeq" id="WP_010879885.1">
    <property type="nucleotide sequence ID" value="NC_000917.1"/>
</dbReference>
<dbReference type="PDB" id="1YTL">
    <property type="method" value="X-ray"/>
    <property type="resolution" value="1.80 A"/>
    <property type="chains" value="A/B/C/D=2-175"/>
</dbReference>
<dbReference type="PDBsum" id="1YTL"/>
<dbReference type="SMR" id="O30273"/>
<dbReference type="STRING" id="224325.AF_2398"/>
<dbReference type="PaxDb" id="224325-AF_2398"/>
<dbReference type="EnsemblBacteria" id="AAB91265">
    <property type="protein sequence ID" value="AAB91265"/>
    <property type="gene ID" value="AF_2398"/>
</dbReference>
<dbReference type="GeneID" id="1485628"/>
<dbReference type="KEGG" id="afu:AF_2398"/>
<dbReference type="eggNOG" id="arCOG04408">
    <property type="taxonomic scope" value="Archaea"/>
</dbReference>
<dbReference type="HOGENOM" id="CLU_123700_0_0_2"/>
<dbReference type="OrthoDB" id="120588at2157"/>
<dbReference type="PhylomeDB" id="O30273"/>
<dbReference type="EvolutionaryTrace" id="O30273"/>
<dbReference type="Proteomes" id="UP000002199">
    <property type="component" value="Chromosome"/>
</dbReference>
<dbReference type="GO" id="GO:0019385">
    <property type="term" value="P:methanogenesis, from acetate"/>
    <property type="evidence" value="ECO:0007669"/>
    <property type="project" value="InterPro"/>
</dbReference>
<dbReference type="Gene3D" id="3.40.50.1220">
    <property type="entry name" value="TPP-binding domain"/>
    <property type="match status" value="1"/>
</dbReference>
<dbReference type="HAMAP" id="MF_01134">
    <property type="entry name" value="CdhB"/>
    <property type="match status" value="1"/>
</dbReference>
<dbReference type="InterPro" id="IPR003704">
    <property type="entry name" value="CdhB"/>
</dbReference>
<dbReference type="InterPro" id="IPR029035">
    <property type="entry name" value="DHS-like_NAD/FAD-binding_dom"/>
</dbReference>
<dbReference type="NCBIfam" id="TIGR00315">
    <property type="entry name" value="cdhB"/>
    <property type="match status" value="1"/>
</dbReference>
<dbReference type="Pfam" id="PF02552">
    <property type="entry name" value="CO_dh"/>
    <property type="match status" value="1"/>
</dbReference>
<dbReference type="PIRSF" id="PIRSF006035">
    <property type="entry name" value="CO_dh_b_ACDS_e"/>
    <property type="match status" value="1"/>
</dbReference>
<dbReference type="SUPFAM" id="SSF52467">
    <property type="entry name" value="DHS-like NAD/FAD-binding domain"/>
    <property type="match status" value="1"/>
</dbReference>
<sequence>MAKALEQPFDVANIPGPKMATLLEKGKPVANMIKKAKRPLLIVGPDMTDEMFERVKKFVEKDITVVATGSAITRFIDAGLGEKVNYAVLHELTQFLLDPDWKGFDGQGNYDLVLMLGSIYYHGSQMLAAIKNFAPHIRALAIDRYYHPNADMSFGNLWKKEEDYLKLLDEILAEL</sequence>
<comment type="function">
    <text evidence="1">Part of a complex that catalyzes the reversible cleavage of acetyl-CoA, allowing autotrophic growth from CO(2). The alpha-epsilon subcomponent functions as a carbon monoxide dehydrogenase. The precise role of the epsilon subunit is unclear; it may have a stabilizing role within the alpha(2)epsilon(2) component and/or be involved in electron transfer to FAD during a potential FAD-mediated CO oxidation.</text>
</comment>
<comment type="subunit">
    <text evidence="1">Heterotetramer of two alpha and two epsilon subunits. The ACDS complex is made up of alpha, epsilon, beta, gamma and delta subunits with a probable stoichiometry of (alpha(2)epsilon(2))(4)-beta(8)-(gamma(1)delta(1))(8).</text>
</comment>
<comment type="similarity">
    <text evidence="1">Belongs to the CdhB family.</text>
</comment>
<reference key="1">
    <citation type="journal article" date="1997" name="Nature">
        <title>The complete genome sequence of the hyperthermophilic, sulphate-reducing archaeon Archaeoglobus fulgidus.</title>
        <authorList>
            <person name="Klenk H.-P."/>
            <person name="Clayton R.A."/>
            <person name="Tomb J.-F."/>
            <person name="White O."/>
            <person name="Nelson K.E."/>
            <person name="Ketchum K.A."/>
            <person name="Dodson R.J."/>
            <person name="Gwinn M.L."/>
            <person name="Hickey E.K."/>
            <person name="Peterson J.D."/>
            <person name="Richardson D.L."/>
            <person name="Kerlavage A.R."/>
            <person name="Graham D.E."/>
            <person name="Kyrpides N.C."/>
            <person name="Fleischmann R.D."/>
            <person name="Quackenbush J."/>
            <person name="Lee N.H."/>
            <person name="Sutton G.G."/>
            <person name="Gill S.R."/>
            <person name="Kirkness E.F."/>
            <person name="Dougherty B.A."/>
            <person name="McKenney K."/>
            <person name="Adams M.D."/>
            <person name="Loftus B.J."/>
            <person name="Peterson S.N."/>
            <person name="Reich C.I."/>
            <person name="McNeil L.K."/>
            <person name="Badger J.H."/>
            <person name="Glodek A."/>
            <person name="Zhou L."/>
            <person name="Overbeek R."/>
            <person name="Gocayne J.D."/>
            <person name="Weidman J.F."/>
            <person name="McDonald L.A."/>
            <person name="Utterback T.R."/>
            <person name="Cotton M.D."/>
            <person name="Spriggs T."/>
            <person name="Artiach P."/>
            <person name="Kaine B.P."/>
            <person name="Sykes S.M."/>
            <person name="Sadow P.W."/>
            <person name="D'Andrea K.P."/>
            <person name="Bowman C."/>
            <person name="Fujii C."/>
            <person name="Garland S.A."/>
            <person name="Mason T.M."/>
            <person name="Olsen G.J."/>
            <person name="Fraser C.M."/>
            <person name="Smith H.O."/>
            <person name="Woese C.R."/>
            <person name="Venter J.C."/>
        </authorList>
    </citation>
    <scope>NUCLEOTIDE SEQUENCE [LARGE SCALE GENOMIC DNA]</scope>
    <source>
        <strain>ATCC 49558 / DSM 4304 / JCM 9628 / NBRC 100126 / VC-16</strain>
    </source>
</reference>
<reference key="2">
    <citation type="journal article" date="1998" name="Arch. Microbiol.">
        <title>Acetyl-CoA decarbonylase/synthase complex from Archaeoglobus fulgidus.</title>
        <authorList>
            <person name="Dai Y.R."/>
            <person name="Reed D.W."/>
            <person name="Millstein J.H."/>
            <person name="Hartzell P.L."/>
            <person name="Grahame D.A."/>
            <person name="DeMoll E."/>
        </authorList>
    </citation>
    <scope>PROTEIN SEQUENCE OF 2-30</scope>
    <source>
        <strain>ATCC 49558 / DSM 4304 / JCM 9628 / NBRC 100126 / VC-16</strain>
    </source>
</reference>
<name>ACDE2_ARCFU</name>